<sequence>MKLTKLVALAGAALASPIQLVPREGSFLGFNYGSEKVHGVNLGGWFVLEPFITPSLFEAFGNNDANVPVDEYHYTAWLGKEEAEKRLTDHWNTWITEYDIKAIAENYKLNLVRIPIGYWAFSLLPNDPYVQGQEAYLDRALGWCRKYGVKAWVDVHGVPGSQNGFDNSGLRDHWDWPNADNVQHSINVINYIAGKYGAPEYNDIVVGIELVNEPLGPAIGMEVIEKYFQEGFWTVRHAGSDTAVVIHDAFQEKNYFNNFMTTEQGFWNVVLDHHQYQVFSPGELARNIDQHIAEVCNVGRQASTEYHWRIFGEWSAALTDCTHWLNGVGKGPRLDGSFPGSYYQRSCQGRGDIQTWSEQDKQESRRYVEAQLDAWEHGGDGWIYWTYKTENALEWDFRRLVDNGIFPFPYWDRQFPNQCGF</sequence>
<evidence type="ECO:0000250" key="1"/>
<evidence type="ECO:0000255" key="2"/>
<evidence type="ECO:0000305" key="3"/>
<accession>Q12725</accession>
<accession>Q6C2T2</accession>
<keyword id="KW-0961">Cell wall biogenesis/degradation</keyword>
<keyword id="KW-1015">Disulfide bond</keyword>
<keyword id="KW-0326">Glycosidase</keyword>
<keyword id="KW-0378">Hydrolase</keyword>
<keyword id="KW-1185">Reference proteome</keyword>
<keyword id="KW-0964">Secreted</keyword>
<keyword id="KW-0732">Signal</keyword>
<reference key="1">
    <citation type="journal article" date="1999" name="Yeast">
        <title>Cloning and characterization of 1,3-beta-glucanase-encoding genes from non-conventional yeasts.</title>
        <authorList>
            <person name="Esteban P.F."/>
            <person name="Vazquez de Aldana C.R."/>
            <person name="del Rey F."/>
        </authorList>
    </citation>
    <scope>NUCLEOTIDE SEQUENCE [GENOMIC DNA]</scope>
    <source>
        <strain>ATCC 20460 / W29 / CBS 7504 / IFP29</strain>
    </source>
</reference>
<reference key="2">
    <citation type="journal article" date="2004" name="Nature">
        <title>Genome evolution in yeasts.</title>
        <authorList>
            <person name="Dujon B."/>
            <person name="Sherman D."/>
            <person name="Fischer G."/>
            <person name="Durrens P."/>
            <person name="Casaregola S."/>
            <person name="Lafontaine I."/>
            <person name="de Montigny J."/>
            <person name="Marck C."/>
            <person name="Neuveglise C."/>
            <person name="Talla E."/>
            <person name="Goffard N."/>
            <person name="Frangeul L."/>
            <person name="Aigle M."/>
            <person name="Anthouard V."/>
            <person name="Babour A."/>
            <person name="Barbe V."/>
            <person name="Barnay S."/>
            <person name="Blanchin S."/>
            <person name="Beckerich J.-M."/>
            <person name="Beyne E."/>
            <person name="Bleykasten C."/>
            <person name="Boisrame A."/>
            <person name="Boyer J."/>
            <person name="Cattolico L."/>
            <person name="Confanioleri F."/>
            <person name="de Daruvar A."/>
            <person name="Despons L."/>
            <person name="Fabre E."/>
            <person name="Fairhead C."/>
            <person name="Ferry-Dumazet H."/>
            <person name="Groppi A."/>
            <person name="Hantraye F."/>
            <person name="Hennequin C."/>
            <person name="Jauniaux N."/>
            <person name="Joyet P."/>
            <person name="Kachouri R."/>
            <person name="Kerrest A."/>
            <person name="Koszul R."/>
            <person name="Lemaire M."/>
            <person name="Lesur I."/>
            <person name="Ma L."/>
            <person name="Muller H."/>
            <person name="Nicaud J.-M."/>
            <person name="Nikolski M."/>
            <person name="Oztas S."/>
            <person name="Ozier-Kalogeropoulos O."/>
            <person name="Pellenz S."/>
            <person name="Potier S."/>
            <person name="Richard G.-F."/>
            <person name="Straub M.-L."/>
            <person name="Suleau A."/>
            <person name="Swennen D."/>
            <person name="Tekaia F."/>
            <person name="Wesolowski-Louvel M."/>
            <person name="Westhof E."/>
            <person name="Wirth B."/>
            <person name="Zeniou-Meyer M."/>
            <person name="Zivanovic Y."/>
            <person name="Bolotin-Fukuhara M."/>
            <person name="Thierry A."/>
            <person name="Bouchier C."/>
            <person name="Caudron B."/>
            <person name="Scarpelli C."/>
            <person name="Gaillardin C."/>
            <person name="Weissenbach J."/>
            <person name="Wincker P."/>
            <person name="Souciet J.-L."/>
        </authorList>
    </citation>
    <scope>NUCLEOTIDE SEQUENCE [LARGE SCALE GENOMIC DNA]</scope>
    <source>
        <strain>CLIB 122 / E 150</strain>
    </source>
</reference>
<comment type="catalytic activity">
    <reaction>
        <text>Successive hydrolysis of beta-D-glucose units from the non-reducing ends of (1-&gt;3)-beta-D-glucans, releasing alpha-glucose.</text>
        <dbReference type="EC" id="3.2.1.58"/>
    </reaction>
</comment>
<comment type="subcellular location">
    <subcellularLocation>
        <location evidence="1">Secreted</location>
    </subcellularLocation>
</comment>
<comment type="similarity">
    <text evidence="3">Belongs to the glycosyl hydrolase 5 (cellulase A) family.</text>
</comment>
<protein>
    <recommendedName>
        <fullName>Glucan 1,3-beta-glucosidase</fullName>
        <ecNumber>3.2.1.58</ecNumber>
    </recommendedName>
    <alternativeName>
        <fullName>Exo-1,3-beta-glucanase</fullName>
    </alternativeName>
</protein>
<gene>
    <name type="primary">EXG1</name>
    <name type="ordered locus">YALI0F05390g</name>
</gene>
<organism>
    <name type="scientific">Yarrowia lipolytica (strain CLIB 122 / E 150)</name>
    <name type="common">Yeast</name>
    <name type="synonym">Candida lipolytica</name>
    <dbReference type="NCBI Taxonomy" id="284591"/>
    <lineage>
        <taxon>Eukaryota</taxon>
        <taxon>Fungi</taxon>
        <taxon>Dikarya</taxon>
        <taxon>Ascomycota</taxon>
        <taxon>Saccharomycotina</taxon>
        <taxon>Dipodascomycetes</taxon>
        <taxon>Dipodascales</taxon>
        <taxon>Dipodascales incertae sedis</taxon>
        <taxon>Yarrowia</taxon>
    </lineage>
</organism>
<proteinExistence type="inferred from homology"/>
<feature type="signal peptide" evidence="2">
    <location>
        <begin position="1"/>
        <end position="15"/>
    </location>
</feature>
<feature type="chain" id="PRO_0000007888" description="Glucan 1,3-beta-glucosidase">
    <location>
        <begin position="16"/>
        <end position="421"/>
    </location>
</feature>
<feature type="active site" description="Proton donor" evidence="1">
    <location>
        <position position="213"/>
    </location>
</feature>
<feature type="active site" description="Nucleophile" evidence="1">
    <location>
        <position position="313"/>
    </location>
</feature>
<feature type="disulfide bond" evidence="1">
    <location>
        <begin position="296"/>
        <end position="419"/>
    </location>
</feature>
<feature type="disulfide bond" evidence="1">
    <location>
        <begin position="321"/>
        <end position="347"/>
    </location>
</feature>
<feature type="sequence conflict" description="In Ref. 1; CAA86952." evidence="3" ref="1">
    <original>R</original>
    <variation>S</variation>
    <location>
        <position position="333"/>
    </location>
</feature>
<dbReference type="EC" id="3.2.1.58"/>
<dbReference type="EMBL" id="Z46872">
    <property type="protein sequence ID" value="CAA86952.1"/>
    <property type="molecule type" value="Genomic_DNA"/>
</dbReference>
<dbReference type="EMBL" id="CR382132">
    <property type="protein sequence ID" value="CAG77837.1"/>
    <property type="molecule type" value="Genomic_DNA"/>
</dbReference>
<dbReference type="RefSeq" id="XP_505030.1">
    <property type="nucleotide sequence ID" value="XM_505030.1"/>
</dbReference>
<dbReference type="SMR" id="Q12725"/>
<dbReference type="FunCoup" id="Q12725">
    <property type="interactions" value="125"/>
</dbReference>
<dbReference type="STRING" id="284591.Q12725"/>
<dbReference type="CAZy" id="GH5">
    <property type="family name" value="Glycoside Hydrolase Family 5"/>
</dbReference>
<dbReference type="EnsemblFungi" id="CAG77837">
    <property type="protein sequence ID" value="CAG77837"/>
    <property type="gene ID" value="YALI0_F05390g"/>
</dbReference>
<dbReference type="KEGG" id="yli:2908269"/>
<dbReference type="VEuPathDB" id="FungiDB:YALI0_F05390g"/>
<dbReference type="HOGENOM" id="CLU_004624_0_1_1"/>
<dbReference type="InParanoid" id="Q12725"/>
<dbReference type="OMA" id="GWDMQDL"/>
<dbReference type="OrthoDB" id="103293at4891"/>
<dbReference type="Proteomes" id="UP000001300">
    <property type="component" value="Chromosome F"/>
</dbReference>
<dbReference type="GO" id="GO:0000935">
    <property type="term" value="C:division septum"/>
    <property type="evidence" value="ECO:0007669"/>
    <property type="project" value="EnsemblFungi"/>
</dbReference>
<dbReference type="GO" id="GO:0005576">
    <property type="term" value="C:extracellular region"/>
    <property type="evidence" value="ECO:0000318"/>
    <property type="project" value="GO_Central"/>
</dbReference>
<dbReference type="GO" id="GO:1990819">
    <property type="term" value="C:mating projection actin fusion focus"/>
    <property type="evidence" value="ECO:0007669"/>
    <property type="project" value="EnsemblFungi"/>
</dbReference>
<dbReference type="GO" id="GO:0046557">
    <property type="term" value="F:glucan endo-1,6-beta-glucosidase activity"/>
    <property type="evidence" value="ECO:0007669"/>
    <property type="project" value="EnsemblFungi"/>
</dbReference>
<dbReference type="GO" id="GO:0004338">
    <property type="term" value="F:glucan exo-1,3-beta-glucosidase activity"/>
    <property type="evidence" value="ECO:0000318"/>
    <property type="project" value="GO_Central"/>
</dbReference>
<dbReference type="GO" id="GO:0070879">
    <property type="term" value="P:fungal-type cell wall beta-glucan metabolic process"/>
    <property type="evidence" value="ECO:0007669"/>
    <property type="project" value="EnsemblFungi"/>
</dbReference>
<dbReference type="GO" id="GO:1904541">
    <property type="term" value="P:fungal-type cell wall disassembly involved in conjugation with cellular fusion"/>
    <property type="evidence" value="ECO:0007669"/>
    <property type="project" value="EnsemblFungi"/>
</dbReference>
<dbReference type="GO" id="GO:0009251">
    <property type="term" value="P:glucan catabolic process"/>
    <property type="evidence" value="ECO:0000318"/>
    <property type="project" value="GO_Central"/>
</dbReference>
<dbReference type="FunFam" id="3.20.20.80:FF:000033">
    <property type="entry name" value="Glucan 1,3-beta-glucosidase A"/>
    <property type="match status" value="1"/>
</dbReference>
<dbReference type="Gene3D" id="3.20.20.80">
    <property type="entry name" value="Glycosidases"/>
    <property type="match status" value="1"/>
</dbReference>
<dbReference type="InterPro" id="IPR001547">
    <property type="entry name" value="Glyco_hydro_5"/>
</dbReference>
<dbReference type="InterPro" id="IPR018087">
    <property type="entry name" value="Glyco_hydro_5_CS"/>
</dbReference>
<dbReference type="InterPro" id="IPR017853">
    <property type="entry name" value="Glycoside_hydrolase_SF"/>
</dbReference>
<dbReference type="InterPro" id="IPR050386">
    <property type="entry name" value="Glycosyl_hydrolase_5"/>
</dbReference>
<dbReference type="PANTHER" id="PTHR31297:SF1">
    <property type="entry name" value="GLUCAN 1,3-BETA-GLUCOSIDASE I_II-RELATED"/>
    <property type="match status" value="1"/>
</dbReference>
<dbReference type="PANTHER" id="PTHR31297">
    <property type="entry name" value="GLUCAN ENDO-1,6-BETA-GLUCOSIDASE B"/>
    <property type="match status" value="1"/>
</dbReference>
<dbReference type="Pfam" id="PF00150">
    <property type="entry name" value="Cellulase"/>
    <property type="match status" value="1"/>
</dbReference>
<dbReference type="SUPFAM" id="SSF51445">
    <property type="entry name" value="(Trans)glycosidases"/>
    <property type="match status" value="1"/>
</dbReference>
<dbReference type="PROSITE" id="PS00659">
    <property type="entry name" value="GLYCOSYL_HYDROL_F5"/>
    <property type="match status" value="1"/>
</dbReference>
<name>EXG_YARLI</name>